<reference key="1">
    <citation type="journal article" date="1988" name="Biochem. J.">
        <title>The collagenase gene family in humans consists of at least four members.</title>
        <authorList>
            <person name="Muller D."/>
            <person name="Quantin B."/>
            <person name="Gesnel M.-C."/>
            <person name="Millon-Collard R."/>
            <person name="Abecassis J."/>
            <person name="Breathnach R."/>
        </authorList>
    </citation>
    <scope>NUCLEOTIDE SEQUENCE [MRNA]</scope>
</reference>
<reference key="2">
    <citation type="journal article" date="1992" name="Biochem. J.">
        <title>Molecular characterization of a low-molecular-mass matrix metalloproteinase secreted by glomerular mesangial cells as PUMP-1.</title>
        <authorList>
            <person name="Marti H.P."/>
            <person name="McNeil L."/>
            <person name="Thomas G."/>
            <person name="Davies M."/>
            <person name="Lovett D.H."/>
        </authorList>
    </citation>
    <scope>NUCLEOTIDE SEQUENCE [MRNA]</scope>
    <source>
        <tissue>Kidney</tissue>
    </source>
</reference>
<reference key="3">
    <citation type="journal article" date="1994" name="J. Biol. Chem.">
        <title>Structure and expression of the human gene for the matrix metalloproteinase matrilysin.</title>
        <authorList>
            <person name="Gaire M."/>
            <person name="Magbanua Z."/>
            <person name="McDonnell S."/>
            <person name="McNeil L.B."/>
            <person name="Lovett D.H."/>
            <person name="Matrisian L.M."/>
        </authorList>
    </citation>
    <scope>NUCLEOTIDE SEQUENCE [GENOMIC DNA]</scope>
    <source>
        <tissue>Placenta</tissue>
    </source>
</reference>
<reference key="4">
    <citation type="submission" date="2004-10" db="EMBL/GenBank/DDBJ databases">
        <authorList>
            <consortium name="NIEHS SNPs program"/>
        </authorList>
    </citation>
    <scope>NUCLEOTIDE SEQUENCE [GENOMIC DNA]</scope>
    <scope>VARIANTS HIS-77; ASP-137 AND LEU-241</scope>
</reference>
<reference key="5">
    <citation type="journal article" date="2004" name="Genome Res.">
        <title>The status, quality, and expansion of the NIH full-length cDNA project: the Mammalian Gene Collection (MGC).</title>
        <authorList>
            <consortium name="The MGC Project Team"/>
        </authorList>
    </citation>
    <scope>NUCLEOTIDE SEQUENCE [LARGE SCALE MRNA]</scope>
    <source>
        <tissue>Colon</tissue>
    </source>
</reference>
<reference key="6">
    <citation type="journal article" date="1990" name="Cancer Res.">
        <title>Purification and characterization of extracellular matrix-degrading metalloproteinase, matrin (pump-1), secreted from human rectal carcinoma cell line.</title>
        <authorList>
            <person name="Miyazaki K."/>
            <person name="Hattori Y."/>
            <person name="Umenishi F."/>
            <person name="Yasumitsu H."/>
            <person name="Umeda M."/>
        </authorList>
    </citation>
    <scope>PROTEIN SEQUENCE OF 18-42</scope>
</reference>
<reference key="7">
    <citation type="journal article" date="1989" name="Biochemistry">
        <title>Pump-1 cDNA codes for a protein with characteristics similar to those of classical collagenase family members.</title>
        <authorList>
            <person name="Quantin B."/>
            <person name="Murphy G."/>
            <person name="Breathnach R."/>
        </authorList>
    </citation>
    <scope>FUNCTION</scope>
</reference>
<reference key="8">
    <citation type="journal article" date="1995" name="Biochemistry">
        <title>Matrilysin-inhibitor complexes: common themes among metalloproteases.</title>
        <authorList>
            <person name="Browner M.F."/>
            <person name="Smith W.W."/>
            <person name="Castelhano A.L."/>
        </authorList>
    </citation>
    <scope>X-RAY CRYSTALLOGRAPHY (2.3 ANGSTROMS)</scope>
</reference>
<accession>P09237</accession>
<accession>Q9BTK9</accession>
<organism>
    <name type="scientific">Homo sapiens</name>
    <name type="common">Human</name>
    <dbReference type="NCBI Taxonomy" id="9606"/>
    <lineage>
        <taxon>Eukaryota</taxon>
        <taxon>Metazoa</taxon>
        <taxon>Chordata</taxon>
        <taxon>Craniata</taxon>
        <taxon>Vertebrata</taxon>
        <taxon>Euteleostomi</taxon>
        <taxon>Mammalia</taxon>
        <taxon>Eutheria</taxon>
        <taxon>Euarchontoglires</taxon>
        <taxon>Primates</taxon>
        <taxon>Haplorrhini</taxon>
        <taxon>Catarrhini</taxon>
        <taxon>Hominidae</taxon>
        <taxon>Homo</taxon>
    </lineage>
</organism>
<dbReference type="EC" id="3.4.24.23"/>
<dbReference type="EMBL" id="X07819">
    <property type="protein sequence ID" value="CAA30678.1"/>
    <property type="molecule type" value="mRNA"/>
</dbReference>
<dbReference type="EMBL" id="Z11887">
    <property type="protein sequence ID" value="CAA77942.1"/>
    <property type="molecule type" value="mRNA"/>
</dbReference>
<dbReference type="EMBL" id="L22524">
    <property type="protein sequence ID" value="AAC37543.1"/>
    <property type="molecule type" value="Genomic_DNA"/>
</dbReference>
<dbReference type="EMBL" id="L22519">
    <property type="protein sequence ID" value="AAC37543.1"/>
    <property type="status" value="JOINED"/>
    <property type="molecule type" value="Genomic_DNA"/>
</dbReference>
<dbReference type="EMBL" id="L22520">
    <property type="protein sequence ID" value="AAC37543.1"/>
    <property type="status" value="JOINED"/>
    <property type="molecule type" value="Genomic_DNA"/>
</dbReference>
<dbReference type="EMBL" id="L22521">
    <property type="protein sequence ID" value="AAC37543.1"/>
    <property type="status" value="JOINED"/>
    <property type="molecule type" value="Genomic_DNA"/>
</dbReference>
<dbReference type="EMBL" id="L22522">
    <property type="protein sequence ID" value="AAC37543.1"/>
    <property type="status" value="JOINED"/>
    <property type="molecule type" value="Genomic_DNA"/>
</dbReference>
<dbReference type="EMBL" id="L22523">
    <property type="protein sequence ID" value="AAC37543.1"/>
    <property type="status" value="JOINED"/>
    <property type="molecule type" value="Genomic_DNA"/>
</dbReference>
<dbReference type="EMBL" id="AY795972">
    <property type="protein sequence ID" value="AAV40839.1"/>
    <property type="molecule type" value="Genomic_DNA"/>
</dbReference>
<dbReference type="EMBL" id="BC003635">
    <property type="protein sequence ID" value="AAH03635.1"/>
    <property type="molecule type" value="mRNA"/>
</dbReference>
<dbReference type="CCDS" id="CCDS8317.1"/>
<dbReference type="PIR" id="B28816">
    <property type="entry name" value="KCHUM"/>
</dbReference>
<dbReference type="RefSeq" id="NP_002414.1">
    <property type="nucleotide sequence ID" value="NM_002423.5"/>
</dbReference>
<dbReference type="PDB" id="1MMP">
    <property type="method" value="X-ray"/>
    <property type="resolution" value="2.30 A"/>
    <property type="chains" value="A/B=95-264"/>
</dbReference>
<dbReference type="PDB" id="1MMQ">
    <property type="method" value="X-ray"/>
    <property type="resolution" value="1.90 A"/>
    <property type="chains" value="A=95-264"/>
</dbReference>
<dbReference type="PDB" id="1MMR">
    <property type="method" value="X-ray"/>
    <property type="resolution" value="2.40 A"/>
    <property type="chains" value="A=95-264"/>
</dbReference>
<dbReference type="PDB" id="2DDY">
    <property type="method" value="NMR"/>
    <property type="chains" value="A=95-267"/>
</dbReference>
<dbReference type="PDB" id="2MZE">
    <property type="method" value="NMR"/>
    <property type="chains" value="A=18-267"/>
</dbReference>
<dbReference type="PDB" id="2MZH">
    <property type="method" value="NMR"/>
    <property type="chains" value="A=20-267"/>
</dbReference>
<dbReference type="PDB" id="2MZI">
    <property type="method" value="NMR"/>
    <property type="chains" value="A=18-267"/>
</dbReference>
<dbReference type="PDB" id="2Y6C">
    <property type="method" value="X-ray"/>
    <property type="resolution" value="1.70 A"/>
    <property type="chains" value="A=95-258"/>
</dbReference>
<dbReference type="PDB" id="2Y6D">
    <property type="method" value="X-ray"/>
    <property type="resolution" value="1.60 A"/>
    <property type="chains" value="A=95-267"/>
</dbReference>
<dbReference type="PDB" id="5UE2">
    <property type="method" value="NMR"/>
    <property type="chains" value="A=21-267"/>
</dbReference>
<dbReference type="PDB" id="5UE5">
    <property type="method" value="NMR"/>
    <property type="chains" value="A=21-267"/>
</dbReference>
<dbReference type="PDB" id="7WXX">
    <property type="method" value="X-ray"/>
    <property type="resolution" value="1.50 A"/>
    <property type="chains" value="A=95-267"/>
</dbReference>
<dbReference type="PDB" id="8JUD">
    <property type="method" value="X-ray"/>
    <property type="resolution" value="1.50 A"/>
    <property type="chains" value="A=95-267"/>
</dbReference>
<dbReference type="PDB" id="8JUF">
    <property type="method" value="X-ray"/>
    <property type="resolution" value="1.39 A"/>
    <property type="chains" value="A=95-267"/>
</dbReference>
<dbReference type="PDB" id="8JUG">
    <property type="method" value="X-ray"/>
    <property type="resolution" value="1.30 A"/>
    <property type="chains" value="A=95-267"/>
</dbReference>
<dbReference type="PDB" id="8K4Z">
    <property type="method" value="X-ray"/>
    <property type="resolution" value="1.70 A"/>
    <property type="chains" value="A=95-267"/>
</dbReference>
<dbReference type="PDBsum" id="1MMP"/>
<dbReference type="PDBsum" id="1MMQ"/>
<dbReference type="PDBsum" id="1MMR"/>
<dbReference type="PDBsum" id="2DDY"/>
<dbReference type="PDBsum" id="2MZE"/>
<dbReference type="PDBsum" id="2MZH"/>
<dbReference type="PDBsum" id="2MZI"/>
<dbReference type="PDBsum" id="2Y6C"/>
<dbReference type="PDBsum" id="2Y6D"/>
<dbReference type="PDBsum" id="5UE2"/>
<dbReference type="PDBsum" id="5UE5"/>
<dbReference type="PDBsum" id="7WXX"/>
<dbReference type="PDBsum" id="8JUD"/>
<dbReference type="PDBsum" id="8JUF"/>
<dbReference type="PDBsum" id="8JUG"/>
<dbReference type="PDBsum" id="8K4Z"/>
<dbReference type="BMRB" id="P09237"/>
<dbReference type="SMR" id="P09237"/>
<dbReference type="BioGRID" id="110459">
    <property type="interactions" value="32"/>
</dbReference>
<dbReference type="FunCoup" id="P09237">
    <property type="interactions" value="237"/>
</dbReference>
<dbReference type="IntAct" id="P09237">
    <property type="interactions" value="20"/>
</dbReference>
<dbReference type="MINT" id="P09237"/>
<dbReference type="STRING" id="9606.ENSP00000260227"/>
<dbReference type="BindingDB" id="P09237"/>
<dbReference type="ChEMBL" id="CHEMBL4073"/>
<dbReference type="DrugBank" id="DB08170">
    <property type="generic name" value="(1R)-N,6-DIHYDROXY-7-METHOXY-2-[(4-METHOXYPHENYL)SULFONYL]-1,2,3,4-TETRAHYDROISOQUINOLINE-1-CARBOXAMIDE"/>
</dbReference>
<dbReference type="DrugBank" id="DB07145">
    <property type="generic name" value="(2R)-N-HYDROXY-2-[(3S)-3-METHYL-3-{4-[(2-METHYLQUINOLIN-4-YL)METHOXY]PHENYL}-2-OXOPYRROLIDIN-1-YL]PROPANAMIDE"/>
</dbReference>
<dbReference type="DrugBank" id="DB08493">
    <property type="generic name" value="5-METHYL-3-(9-OXO-1,8-DIAZA-TRICYCLO[10.6.1.013,18]NONADECA-12(19),13,15,17-TETRAEN-10-YLCARBAMOYL)-HEXANOIC ACID"/>
</dbReference>
<dbReference type="DrugBank" id="DB07556">
    <property type="generic name" value="CGS-27023"/>
</dbReference>
<dbReference type="DrugBank" id="DB00786">
    <property type="generic name" value="Marimastat"/>
</dbReference>
<dbReference type="DrugBank" id="DB07926">
    <property type="generic name" value="N-[3-(N'-HYDROXYCARBOXAMIDO)-2-(2-METHYLPROPYL)-PROPANOYL]-O-TYROSINE-N-METHYLAMIDE"/>
</dbReference>
<dbReference type="DrugBank" id="DB08489">
    <property type="generic name" value="N4-HYDROXY-2-ISOBUTYL-N1-(9-OXO-1,8-DIAZA-TRICYCLO[10.6.1.013,18]NONADECA-12(19),13,15,17-TETRAEN-10-YL)-SUCCINAMIDE"/>
</dbReference>
<dbReference type="DrugBank" id="DB05100">
    <property type="generic name" value="Prinomastat"/>
</dbReference>
<dbReference type="DrugCentral" id="P09237"/>
<dbReference type="GuidetoPHARMACOLOGY" id="1631"/>
<dbReference type="MEROPS" id="M10.008"/>
<dbReference type="iPTMnet" id="P09237"/>
<dbReference type="PhosphoSitePlus" id="P09237"/>
<dbReference type="BioMuta" id="MMP7"/>
<dbReference type="DMDM" id="116861"/>
<dbReference type="jPOST" id="P09237"/>
<dbReference type="MassIVE" id="P09237"/>
<dbReference type="PaxDb" id="9606-ENSP00000260227"/>
<dbReference type="PeptideAtlas" id="P09237"/>
<dbReference type="ProteomicsDB" id="52210"/>
<dbReference type="ABCD" id="P09237">
    <property type="antibodies" value="1 sequenced antibody"/>
</dbReference>
<dbReference type="Antibodypedia" id="18007">
    <property type="antibodies" value="842 antibodies from 41 providers"/>
</dbReference>
<dbReference type="DNASU" id="4316"/>
<dbReference type="Ensembl" id="ENST00000260227.5">
    <property type="protein sequence ID" value="ENSP00000260227.4"/>
    <property type="gene ID" value="ENSG00000137673.9"/>
</dbReference>
<dbReference type="GeneID" id="4316"/>
<dbReference type="KEGG" id="hsa:4316"/>
<dbReference type="MANE-Select" id="ENST00000260227.5">
    <property type="protein sequence ID" value="ENSP00000260227.4"/>
    <property type="RefSeq nucleotide sequence ID" value="NM_002423.5"/>
    <property type="RefSeq protein sequence ID" value="NP_002414.1"/>
</dbReference>
<dbReference type="UCSC" id="uc001phb.4">
    <property type="organism name" value="human"/>
</dbReference>
<dbReference type="AGR" id="HGNC:7174"/>
<dbReference type="CTD" id="4316"/>
<dbReference type="DisGeNET" id="4316"/>
<dbReference type="GeneCards" id="MMP7"/>
<dbReference type="HGNC" id="HGNC:7174">
    <property type="gene designation" value="MMP7"/>
</dbReference>
<dbReference type="HPA" id="ENSG00000137673">
    <property type="expression patterns" value="Tissue enhanced (gallbladder, salivary gland, urinary bladder)"/>
</dbReference>
<dbReference type="MIM" id="178990">
    <property type="type" value="gene"/>
</dbReference>
<dbReference type="neXtProt" id="NX_P09237"/>
<dbReference type="OpenTargets" id="ENSG00000137673"/>
<dbReference type="PharmGKB" id="PA30887"/>
<dbReference type="VEuPathDB" id="HostDB:ENSG00000137673"/>
<dbReference type="eggNOG" id="KOG1565">
    <property type="taxonomic scope" value="Eukaryota"/>
</dbReference>
<dbReference type="GeneTree" id="ENSGT00940000160903"/>
<dbReference type="HOGENOM" id="CLU_015489_4_1_1"/>
<dbReference type="InParanoid" id="P09237"/>
<dbReference type="OMA" id="GINFLYV"/>
<dbReference type="OrthoDB" id="406838at2759"/>
<dbReference type="PAN-GO" id="P09237">
    <property type="GO annotations" value="4 GO annotations based on evolutionary models"/>
</dbReference>
<dbReference type="PhylomeDB" id="P09237"/>
<dbReference type="TreeFam" id="TF315428"/>
<dbReference type="BRENDA" id="3.4.24.23">
    <property type="organism ID" value="2681"/>
</dbReference>
<dbReference type="PathwayCommons" id="P09237"/>
<dbReference type="Reactome" id="R-HSA-1442490">
    <property type="pathway name" value="Collagen degradation"/>
</dbReference>
<dbReference type="Reactome" id="R-HSA-1474228">
    <property type="pathway name" value="Degradation of the extracellular matrix"/>
</dbReference>
<dbReference type="Reactome" id="R-HSA-1592389">
    <property type="pathway name" value="Activation of Matrix Metalloproteinases"/>
</dbReference>
<dbReference type="Reactome" id="R-HSA-2022090">
    <property type="pathway name" value="Assembly of collagen fibrils and other multimeric structures"/>
</dbReference>
<dbReference type="Reactome" id="R-HSA-9009391">
    <property type="pathway name" value="Extra-nuclear estrogen signaling"/>
</dbReference>
<dbReference type="SABIO-RK" id="P09237"/>
<dbReference type="SignaLink" id="P09237"/>
<dbReference type="SIGNOR" id="P09237"/>
<dbReference type="BioGRID-ORCS" id="4316">
    <property type="hits" value="12 hits in 1159 CRISPR screens"/>
</dbReference>
<dbReference type="ChiTaRS" id="MMP7">
    <property type="organism name" value="human"/>
</dbReference>
<dbReference type="EvolutionaryTrace" id="P09237"/>
<dbReference type="GeneWiki" id="MMP7"/>
<dbReference type="GenomeRNAi" id="4316"/>
<dbReference type="Pharos" id="P09237">
    <property type="development level" value="Tchem"/>
</dbReference>
<dbReference type="PRO" id="PR:P09237"/>
<dbReference type="Proteomes" id="UP000005640">
    <property type="component" value="Chromosome 11"/>
</dbReference>
<dbReference type="RNAct" id="P09237">
    <property type="molecule type" value="protein"/>
</dbReference>
<dbReference type="Bgee" id="ENSG00000137673">
    <property type="expression patterns" value="Expressed in gall bladder and 109 other cell types or tissues"/>
</dbReference>
<dbReference type="GO" id="GO:0070062">
    <property type="term" value="C:extracellular exosome"/>
    <property type="evidence" value="ECO:0007005"/>
    <property type="project" value="UniProtKB"/>
</dbReference>
<dbReference type="GO" id="GO:0031012">
    <property type="term" value="C:extracellular matrix"/>
    <property type="evidence" value="ECO:0007669"/>
    <property type="project" value="InterPro"/>
</dbReference>
<dbReference type="GO" id="GO:0005576">
    <property type="term" value="C:extracellular region"/>
    <property type="evidence" value="ECO:0000304"/>
    <property type="project" value="Reactome"/>
</dbReference>
<dbReference type="GO" id="GO:0005615">
    <property type="term" value="C:extracellular space"/>
    <property type="evidence" value="ECO:0000318"/>
    <property type="project" value="GO_Central"/>
</dbReference>
<dbReference type="GO" id="GO:0004175">
    <property type="term" value="F:endopeptidase activity"/>
    <property type="evidence" value="ECO:0000314"/>
    <property type="project" value="UniProtKB"/>
</dbReference>
<dbReference type="GO" id="GO:0004222">
    <property type="term" value="F:metalloendopeptidase activity"/>
    <property type="evidence" value="ECO:0000318"/>
    <property type="project" value="GO_Central"/>
</dbReference>
<dbReference type="GO" id="GO:0008237">
    <property type="term" value="F:metallopeptidase activity"/>
    <property type="evidence" value="ECO:0000314"/>
    <property type="project" value="CAFA"/>
</dbReference>
<dbReference type="GO" id="GO:0004252">
    <property type="term" value="F:serine-type endopeptidase activity"/>
    <property type="evidence" value="ECO:0000304"/>
    <property type="project" value="Reactome"/>
</dbReference>
<dbReference type="GO" id="GO:0008270">
    <property type="term" value="F:zinc ion binding"/>
    <property type="evidence" value="ECO:0007669"/>
    <property type="project" value="InterPro"/>
</dbReference>
<dbReference type="GO" id="GO:0002780">
    <property type="term" value="P:antibacterial peptide biosynthetic process"/>
    <property type="evidence" value="ECO:0007669"/>
    <property type="project" value="Ensembl"/>
</dbReference>
<dbReference type="GO" id="GO:0002779">
    <property type="term" value="P:antibacterial peptide secretion"/>
    <property type="evidence" value="ECO:0007669"/>
    <property type="project" value="Ensembl"/>
</dbReference>
<dbReference type="GO" id="GO:0030574">
    <property type="term" value="P:collagen catabolic process"/>
    <property type="evidence" value="ECO:0000318"/>
    <property type="project" value="GO_Central"/>
</dbReference>
<dbReference type="GO" id="GO:0050829">
    <property type="term" value="P:defense response to Gram-negative bacterium"/>
    <property type="evidence" value="ECO:0007669"/>
    <property type="project" value="Ensembl"/>
</dbReference>
<dbReference type="GO" id="GO:0050830">
    <property type="term" value="P:defense response to Gram-positive bacterium"/>
    <property type="evidence" value="ECO:0007669"/>
    <property type="project" value="Ensembl"/>
</dbReference>
<dbReference type="GO" id="GO:0022617">
    <property type="term" value="P:extracellular matrix disassembly"/>
    <property type="evidence" value="ECO:0000304"/>
    <property type="project" value="Reactome"/>
</dbReference>
<dbReference type="GO" id="GO:0030198">
    <property type="term" value="P:extracellular matrix organization"/>
    <property type="evidence" value="ECO:0000318"/>
    <property type="project" value="GO_Central"/>
</dbReference>
<dbReference type="GO" id="GO:0006509">
    <property type="term" value="P:membrane protein ectodomain proteolysis"/>
    <property type="evidence" value="ECO:0000315"/>
    <property type="project" value="ARUK-UCL"/>
</dbReference>
<dbReference type="GO" id="GO:0031293">
    <property type="term" value="P:membrane protein intracellular domain proteolysis"/>
    <property type="evidence" value="ECO:0000315"/>
    <property type="project" value="ARUK-UCL"/>
</dbReference>
<dbReference type="GO" id="GO:0030335">
    <property type="term" value="P:positive regulation of cell migration"/>
    <property type="evidence" value="ECO:0000314"/>
    <property type="project" value="ARUK-UCL"/>
</dbReference>
<dbReference type="GO" id="GO:0006508">
    <property type="term" value="P:proteolysis"/>
    <property type="evidence" value="ECO:0000314"/>
    <property type="project" value="CAFA"/>
</dbReference>
<dbReference type="GO" id="GO:0042127">
    <property type="term" value="P:regulation of cell population proliferation"/>
    <property type="evidence" value="ECO:0007669"/>
    <property type="project" value="Ensembl"/>
</dbReference>
<dbReference type="GO" id="GO:0009410">
    <property type="term" value="P:response to xenobiotic stimulus"/>
    <property type="evidence" value="ECO:0007669"/>
    <property type="project" value="Ensembl"/>
</dbReference>
<dbReference type="CDD" id="cd04278">
    <property type="entry name" value="ZnMc_MMP"/>
    <property type="match status" value="1"/>
</dbReference>
<dbReference type="FunFam" id="3.40.390.10:FF:000007">
    <property type="entry name" value="Collagenase 3"/>
    <property type="match status" value="1"/>
</dbReference>
<dbReference type="Gene3D" id="3.40.390.10">
    <property type="entry name" value="Collagenase (Catalytic Domain)"/>
    <property type="match status" value="1"/>
</dbReference>
<dbReference type="InterPro" id="IPR033739">
    <property type="entry name" value="M10A_MMP"/>
</dbReference>
<dbReference type="InterPro" id="IPR024079">
    <property type="entry name" value="MetalloPept_cat_dom_sf"/>
</dbReference>
<dbReference type="InterPro" id="IPR001818">
    <property type="entry name" value="Pept_M10_metallopeptidase"/>
</dbReference>
<dbReference type="InterPro" id="IPR021190">
    <property type="entry name" value="Pept_M10A"/>
</dbReference>
<dbReference type="InterPro" id="IPR021158">
    <property type="entry name" value="Pept_M10A_Zn_BS"/>
</dbReference>
<dbReference type="InterPro" id="IPR006026">
    <property type="entry name" value="Peptidase_Metallo"/>
</dbReference>
<dbReference type="InterPro" id="IPR002477">
    <property type="entry name" value="Peptidoglycan-bd-like"/>
</dbReference>
<dbReference type="InterPro" id="IPR036365">
    <property type="entry name" value="PGBD-like_sf"/>
</dbReference>
<dbReference type="PANTHER" id="PTHR10201:SF143">
    <property type="entry name" value="MATRILYSIN"/>
    <property type="match status" value="1"/>
</dbReference>
<dbReference type="PANTHER" id="PTHR10201">
    <property type="entry name" value="MATRIX METALLOPROTEINASE"/>
    <property type="match status" value="1"/>
</dbReference>
<dbReference type="Pfam" id="PF00413">
    <property type="entry name" value="Peptidase_M10"/>
    <property type="match status" value="1"/>
</dbReference>
<dbReference type="Pfam" id="PF01471">
    <property type="entry name" value="PG_binding_1"/>
    <property type="match status" value="1"/>
</dbReference>
<dbReference type="PRINTS" id="PR00138">
    <property type="entry name" value="MATRIXIN"/>
</dbReference>
<dbReference type="SMART" id="SM00235">
    <property type="entry name" value="ZnMc"/>
    <property type="match status" value="1"/>
</dbReference>
<dbReference type="SUPFAM" id="SSF55486">
    <property type="entry name" value="Metalloproteases ('zincins'), catalytic domain"/>
    <property type="match status" value="1"/>
</dbReference>
<dbReference type="SUPFAM" id="SSF47090">
    <property type="entry name" value="PGBD-like"/>
    <property type="match status" value="1"/>
</dbReference>
<dbReference type="PROSITE" id="PS00546">
    <property type="entry name" value="CYSTEINE_SWITCH"/>
    <property type="match status" value="1"/>
</dbReference>
<dbReference type="PROSITE" id="PS00142">
    <property type="entry name" value="ZINC_PROTEASE"/>
    <property type="match status" value="1"/>
</dbReference>
<proteinExistence type="evidence at protein level"/>
<feature type="signal peptide" evidence="2">
    <location>
        <begin position="1"/>
        <end position="17"/>
    </location>
</feature>
<feature type="propeptide" id="PRO_0000028738" description="Activation peptide">
    <location>
        <begin position="18"/>
        <end position="94"/>
    </location>
</feature>
<feature type="chain" id="PRO_0000028739" description="Matrilysin">
    <location>
        <begin position="95"/>
        <end position="267"/>
    </location>
</feature>
<feature type="short sequence motif" description="Cysteine switch" evidence="1">
    <location>
        <begin position="85"/>
        <end position="92"/>
    </location>
</feature>
<feature type="active site">
    <location>
        <position position="215"/>
    </location>
</feature>
<feature type="binding site" description="in inhibited form" evidence="1">
    <location>
        <position position="87"/>
    </location>
    <ligand>
        <name>Zn(2+)</name>
        <dbReference type="ChEBI" id="CHEBI:29105"/>
        <label>2</label>
        <note>catalytic</note>
    </ligand>
</feature>
<feature type="binding site">
    <location>
        <position position="153"/>
    </location>
    <ligand>
        <name>Ca(2+)</name>
        <dbReference type="ChEBI" id="CHEBI:29108"/>
        <label>1</label>
    </ligand>
</feature>
<feature type="binding site">
    <location>
        <position position="163"/>
    </location>
    <ligand>
        <name>Zn(2+)</name>
        <dbReference type="ChEBI" id="CHEBI:29105"/>
        <label>1</label>
    </ligand>
</feature>
<feature type="binding site">
    <location>
        <position position="165"/>
    </location>
    <ligand>
        <name>Zn(2+)</name>
        <dbReference type="ChEBI" id="CHEBI:29105"/>
        <label>1</label>
    </ligand>
</feature>
<feature type="binding site">
    <location>
        <position position="170"/>
    </location>
    <ligand>
        <name>Ca(2+)</name>
        <dbReference type="ChEBI" id="CHEBI:29108"/>
        <label>2</label>
    </ligand>
</feature>
<feature type="binding site">
    <location>
        <position position="171"/>
    </location>
    <ligand>
        <name>Ca(2+)</name>
        <dbReference type="ChEBI" id="CHEBI:29108"/>
        <label>2</label>
    </ligand>
</feature>
<feature type="binding site">
    <location>
        <position position="173"/>
    </location>
    <ligand>
        <name>Ca(2+)</name>
        <dbReference type="ChEBI" id="CHEBI:29108"/>
        <label>2</label>
    </ligand>
</feature>
<feature type="binding site">
    <location>
        <position position="175"/>
    </location>
    <ligand>
        <name>Ca(2+)</name>
        <dbReference type="ChEBI" id="CHEBI:29108"/>
        <label>2</label>
    </ligand>
</feature>
<feature type="binding site">
    <location>
        <position position="178"/>
    </location>
    <ligand>
        <name>Zn(2+)</name>
        <dbReference type="ChEBI" id="CHEBI:29105"/>
        <label>1</label>
    </ligand>
</feature>
<feature type="binding site">
    <location>
        <position position="185"/>
    </location>
    <ligand>
        <name>Ca(2+)</name>
        <dbReference type="ChEBI" id="CHEBI:29108"/>
        <label>1</label>
    </ligand>
</feature>
<feature type="binding site">
    <location>
        <position position="187"/>
    </location>
    <ligand>
        <name>Ca(2+)</name>
        <dbReference type="ChEBI" id="CHEBI:29108"/>
        <label>1</label>
    </ligand>
</feature>
<feature type="binding site">
    <location>
        <position position="189"/>
    </location>
    <ligand>
        <name>Ca(2+)</name>
        <dbReference type="ChEBI" id="CHEBI:29108"/>
        <label>1</label>
    </ligand>
</feature>
<feature type="binding site">
    <location>
        <position position="191"/>
    </location>
    <ligand>
        <name>Zn(2+)</name>
        <dbReference type="ChEBI" id="CHEBI:29105"/>
        <label>1</label>
    </ligand>
</feature>
<feature type="binding site">
    <location>
        <position position="193"/>
    </location>
    <ligand>
        <name>Ca(2+)</name>
        <dbReference type="ChEBI" id="CHEBI:29108"/>
        <label>2</label>
    </ligand>
</feature>
<feature type="binding site">
    <location>
        <position position="196"/>
    </location>
    <ligand>
        <name>Ca(2+)</name>
        <dbReference type="ChEBI" id="CHEBI:29108"/>
        <label>2</label>
    </ligand>
</feature>
<feature type="binding site">
    <location>
        <position position="214"/>
    </location>
    <ligand>
        <name>Zn(2+)</name>
        <dbReference type="ChEBI" id="CHEBI:29105"/>
        <label>2</label>
        <note>catalytic</note>
    </ligand>
</feature>
<feature type="binding site">
    <location>
        <position position="218"/>
    </location>
    <ligand>
        <name>Zn(2+)</name>
        <dbReference type="ChEBI" id="CHEBI:29105"/>
        <label>2</label>
        <note>catalytic</note>
    </ligand>
</feature>
<feature type="binding site">
    <location>
        <position position="224"/>
    </location>
    <ligand>
        <name>Zn(2+)</name>
        <dbReference type="ChEBI" id="CHEBI:29105"/>
        <label>2</label>
        <note>catalytic</note>
    </ligand>
</feature>
<feature type="sequence variant" id="VAR_006729" description="In dbSNP:rs10502001." evidence="4">
    <original>R</original>
    <variation>H</variation>
    <location>
        <position position="77"/>
    </location>
</feature>
<feature type="sequence variant" id="VAR_021027" description="In dbSNP:rs17884789." evidence="4">
    <original>G</original>
    <variation>D</variation>
    <location>
        <position position="137"/>
    </location>
</feature>
<feature type="sequence variant" id="VAR_021028" description="In dbSNP:rs17886506." evidence="4">
    <original>P</original>
    <variation>L</variation>
    <location>
        <position position="241"/>
    </location>
</feature>
<feature type="helix" evidence="8">
    <location>
        <begin position="24"/>
        <end position="26"/>
    </location>
</feature>
<feature type="helix" evidence="8">
    <location>
        <begin position="29"/>
        <end position="41"/>
    </location>
</feature>
<feature type="turn" evidence="9">
    <location>
        <begin position="47"/>
        <end position="49"/>
    </location>
</feature>
<feature type="helix" evidence="8">
    <location>
        <begin position="53"/>
        <end position="66"/>
    </location>
</feature>
<feature type="strand" evidence="11">
    <location>
        <begin position="74"/>
        <end position="76"/>
    </location>
</feature>
<feature type="helix" evidence="8">
    <location>
        <begin position="77"/>
        <end position="83"/>
    </location>
</feature>
<feature type="strand" evidence="10">
    <location>
        <begin position="94"/>
        <end position="97"/>
    </location>
</feature>
<feature type="strand" evidence="8">
    <location>
        <begin position="99"/>
        <end position="103"/>
    </location>
</feature>
<feature type="strand" evidence="13">
    <location>
        <begin position="105"/>
        <end position="115"/>
    </location>
</feature>
<feature type="strand" evidence="6">
    <location>
        <begin position="118"/>
        <end position="120"/>
    </location>
</feature>
<feature type="helix" evidence="13">
    <location>
        <begin position="122"/>
        <end position="137"/>
    </location>
</feature>
<feature type="turn" evidence="14">
    <location>
        <begin position="138"/>
        <end position="141"/>
    </location>
</feature>
<feature type="strand" evidence="13">
    <location>
        <begin position="143"/>
        <end position="146"/>
    </location>
</feature>
<feature type="strand" evidence="13">
    <location>
        <begin position="148"/>
        <end position="150"/>
    </location>
</feature>
<feature type="strand" evidence="13">
    <location>
        <begin position="153"/>
        <end position="159"/>
    </location>
</feature>
<feature type="helix" evidence="10">
    <location>
        <begin position="161"/>
        <end position="163"/>
    </location>
</feature>
<feature type="strand" evidence="13">
    <location>
        <begin position="164"/>
        <end position="166"/>
    </location>
</feature>
<feature type="strand" evidence="13">
    <location>
        <begin position="171"/>
        <end position="174"/>
    </location>
</feature>
<feature type="strand" evidence="13">
    <location>
        <begin position="177"/>
        <end position="179"/>
    </location>
</feature>
<feature type="strand" evidence="13">
    <location>
        <begin position="182"/>
        <end position="184"/>
    </location>
</feature>
<feature type="turn" evidence="13">
    <location>
        <begin position="185"/>
        <end position="188"/>
    </location>
</feature>
<feature type="strand" evidence="13">
    <location>
        <begin position="190"/>
        <end position="193"/>
    </location>
</feature>
<feature type="strand" evidence="13">
    <location>
        <begin position="198"/>
        <end position="207"/>
    </location>
</feature>
<feature type="helix" evidence="13">
    <location>
        <begin position="208"/>
        <end position="219"/>
    </location>
</feature>
<feature type="strand" evidence="12">
    <location>
        <begin position="233"/>
        <end position="235"/>
    </location>
</feature>
<feature type="strand" evidence="7">
    <location>
        <begin position="241"/>
        <end position="243"/>
    </location>
</feature>
<feature type="helix" evidence="13">
    <location>
        <begin position="248"/>
        <end position="258"/>
    </location>
</feature>
<sequence length="267" mass="29677">MRLTVLCAVCLLPGSLALPLPQEAGGMSELQWEQAQDYLKRFYLYDSETKNANSLEAKLKEMQKFFGLPITGMLNSRVIEIMQKPRCGVPDVAEYSLFPNSPKWTSKVVTYRIVSYTRDLPHITVDRLVSKALNMWGKEIPLHFRKVVWGTADIMIGFARGAHGDSYPFDGPGNTLAHAFAPGTGLGGDAHFDEDERWTDGSSLGINFLYAATHELGHSLGMGHSSDPNAVMYPTYGNGDPQNFKLSQDDIKGIQKLYGKRSNSRKK</sequence>
<evidence type="ECO:0000250" key="1"/>
<evidence type="ECO:0000269" key="2">
    <source>
    </source>
</evidence>
<evidence type="ECO:0000269" key="3">
    <source>
    </source>
</evidence>
<evidence type="ECO:0000269" key="4">
    <source ref="4"/>
</evidence>
<evidence type="ECO:0000305" key="5"/>
<evidence type="ECO:0007829" key="6">
    <source>
        <dbReference type="PDB" id="1MMP"/>
    </source>
</evidence>
<evidence type="ECO:0007829" key="7">
    <source>
        <dbReference type="PDB" id="2DDY"/>
    </source>
</evidence>
<evidence type="ECO:0007829" key="8">
    <source>
        <dbReference type="PDB" id="2MZE"/>
    </source>
</evidence>
<evidence type="ECO:0007829" key="9">
    <source>
        <dbReference type="PDB" id="2MZH"/>
    </source>
</evidence>
<evidence type="ECO:0007829" key="10">
    <source>
        <dbReference type="PDB" id="5UE2"/>
    </source>
</evidence>
<evidence type="ECO:0007829" key="11">
    <source>
        <dbReference type="PDB" id="5UE5"/>
    </source>
</evidence>
<evidence type="ECO:0007829" key="12">
    <source>
        <dbReference type="PDB" id="8JUF"/>
    </source>
</evidence>
<evidence type="ECO:0007829" key="13">
    <source>
        <dbReference type="PDB" id="8JUG"/>
    </source>
</evidence>
<evidence type="ECO:0007829" key="14">
    <source>
        <dbReference type="PDB" id="8K4Z"/>
    </source>
</evidence>
<comment type="function">
    <text evidence="3">Degrades casein, gelatins of types I, III, IV, and V, and fibronectin. Activates procollagenase.</text>
</comment>
<comment type="catalytic activity">
    <reaction>
        <text>Cleavage of 14-Ala-|-Leu-15 and 16-Tyr-|-Leu-17 in B chain of insulin. No action on collagen types I, II, IV, V. Cleaves gelatin chain alpha2(I) &gt; alpha1(I).</text>
        <dbReference type="EC" id="3.4.24.23"/>
    </reaction>
</comment>
<comment type="cofactor">
    <cofactor>
        <name>Ca(2+)</name>
        <dbReference type="ChEBI" id="CHEBI:29108"/>
    </cofactor>
    <text>Binds 2 calcium ions per subunit.</text>
</comment>
<comment type="cofactor">
    <cofactor>
        <name>Zn(2+)</name>
        <dbReference type="ChEBI" id="CHEBI:29105"/>
    </cofactor>
    <text>Binds 2 Zn(2+) ions per subunit.</text>
</comment>
<comment type="interaction">
    <interactant intactId="EBI-6595344">
        <id>P09237</id>
    </interactant>
    <interactant intactId="EBI-1170392">
        <id>P17931</id>
        <label>LGALS3</label>
    </interactant>
    <organismsDiffer>false</organismsDiffer>
    <experiments>5</experiments>
</comment>
<comment type="subcellular location">
    <subcellularLocation>
        <location evidence="5">Secreted</location>
        <location evidence="5">Extracellular space</location>
        <location evidence="5">Extracellular matrix</location>
    </subcellularLocation>
</comment>
<comment type="domain">
    <text>The conserved cysteine present in the cysteine-switch motif binds the catalytic zinc ion, thus inhibiting the enzyme. The dissociation of the cysteine from the zinc ion upon the activation-peptide release activates the enzyme.</text>
</comment>
<comment type="similarity">
    <text evidence="5">Belongs to the peptidase M10A family.</text>
</comment>
<gene>
    <name type="primary">MMP7</name>
    <name type="synonym">MPSL1</name>
    <name type="synonym">PUMP1</name>
</gene>
<name>MMP7_HUMAN</name>
<keyword id="KW-0002">3D-structure</keyword>
<keyword id="KW-0106">Calcium</keyword>
<keyword id="KW-0177">Collagen degradation</keyword>
<keyword id="KW-0903">Direct protein sequencing</keyword>
<keyword id="KW-0272">Extracellular matrix</keyword>
<keyword id="KW-0378">Hydrolase</keyword>
<keyword id="KW-0479">Metal-binding</keyword>
<keyword id="KW-0482">Metalloprotease</keyword>
<keyword id="KW-0645">Protease</keyword>
<keyword id="KW-1267">Proteomics identification</keyword>
<keyword id="KW-1185">Reference proteome</keyword>
<keyword id="KW-0964">Secreted</keyword>
<keyword id="KW-0732">Signal</keyword>
<keyword id="KW-0862">Zinc</keyword>
<keyword id="KW-0865">Zymogen</keyword>
<protein>
    <recommendedName>
        <fullName>Matrilysin</fullName>
        <ecNumber>3.4.24.23</ecNumber>
    </recommendedName>
    <alternativeName>
        <fullName>Matrin</fullName>
    </alternativeName>
    <alternativeName>
        <fullName>Matrix metalloproteinase-7</fullName>
        <shortName>MMP-7</shortName>
    </alternativeName>
    <alternativeName>
        <fullName>Pump-1 protease</fullName>
    </alternativeName>
    <alternativeName>
        <fullName>Uterine metalloproteinase</fullName>
    </alternativeName>
</protein>